<gene>
    <name evidence="1" type="primary">recR</name>
    <name type="ordered locus">Bcep1808_1752</name>
</gene>
<accession>A4JEQ3</accession>
<proteinExistence type="inferred from homology"/>
<keyword id="KW-0227">DNA damage</keyword>
<keyword id="KW-0233">DNA recombination</keyword>
<keyword id="KW-0234">DNA repair</keyword>
<keyword id="KW-0479">Metal-binding</keyword>
<keyword id="KW-0862">Zinc</keyword>
<keyword id="KW-0863">Zinc-finger</keyword>
<sequence length="198" mass="21869">MKQPSALSSLVEALRALPGVGPKSAQRIAYHLMQHDREGAERLGRSLLFATEHLQHCEKCNTFTEAQICEVCSDDERDPTLLCVVETPADQIMLEQTMTYRGLYFVLMGRLSPLDGIGPKEIHFDRLVRRASDGVVKEVVLATNFTNEGEATAHYLGQTLKARGLAVTRLARGVPVGGELEYVDAGTIARAMLDRRTM</sequence>
<dbReference type="EMBL" id="CP000614">
    <property type="protein sequence ID" value="ABO54756.1"/>
    <property type="molecule type" value="Genomic_DNA"/>
</dbReference>
<dbReference type="SMR" id="A4JEQ3"/>
<dbReference type="KEGG" id="bvi:Bcep1808_1752"/>
<dbReference type="eggNOG" id="COG0353">
    <property type="taxonomic scope" value="Bacteria"/>
</dbReference>
<dbReference type="HOGENOM" id="CLU_060739_1_2_4"/>
<dbReference type="Proteomes" id="UP000002287">
    <property type="component" value="Chromosome 1"/>
</dbReference>
<dbReference type="GO" id="GO:0003677">
    <property type="term" value="F:DNA binding"/>
    <property type="evidence" value="ECO:0007669"/>
    <property type="project" value="UniProtKB-UniRule"/>
</dbReference>
<dbReference type="GO" id="GO:0008270">
    <property type="term" value="F:zinc ion binding"/>
    <property type="evidence" value="ECO:0007669"/>
    <property type="project" value="UniProtKB-KW"/>
</dbReference>
<dbReference type="GO" id="GO:0006310">
    <property type="term" value="P:DNA recombination"/>
    <property type="evidence" value="ECO:0007669"/>
    <property type="project" value="UniProtKB-UniRule"/>
</dbReference>
<dbReference type="GO" id="GO:0006281">
    <property type="term" value="P:DNA repair"/>
    <property type="evidence" value="ECO:0007669"/>
    <property type="project" value="UniProtKB-UniRule"/>
</dbReference>
<dbReference type="CDD" id="cd01025">
    <property type="entry name" value="TOPRIM_recR"/>
    <property type="match status" value="1"/>
</dbReference>
<dbReference type="Gene3D" id="3.40.1360.10">
    <property type="match status" value="1"/>
</dbReference>
<dbReference type="Gene3D" id="6.10.250.240">
    <property type="match status" value="1"/>
</dbReference>
<dbReference type="Gene3D" id="1.10.8.420">
    <property type="entry name" value="RecR Domain 1"/>
    <property type="match status" value="1"/>
</dbReference>
<dbReference type="HAMAP" id="MF_00017">
    <property type="entry name" value="RecR"/>
    <property type="match status" value="1"/>
</dbReference>
<dbReference type="InterPro" id="IPR000093">
    <property type="entry name" value="DNA_Rcmb_RecR"/>
</dbReference>
<dbReference type="InterPro" id="IPR023627">
    <property type="entry name" value="Rcmb_RecR"/>
</dbReference>
<dbReference type="InterPro" id="IPR015967">
    <property type="entry name" value="Rcmb_RecR_Znf"/>
</dbReference>
<dbReference type="InterPro" id="IPR006171">
    <property type="entry name" value="TOPRIM_dom"/>
</dbReference>
<dbReference type="InterPro" id="IPR034137">
    <property type="entry name" value="TOPRIM_RecR"/>
</dbReference>
<dbReference type="NCBIfam" id="TIGR00615">
    <property type="entry name" value="recR"/>
    <property type="match status" value="1"/>
</dbReference>
<dbReference type="PANTHER" id="PTHR30446">
    <property type="entry name" value="RECOMBINATION PROTEIN RECR"/>
    <property type="match status" value="1"/>
</dbReference>
<dbReference type="PANTHER" id="PTHR30446:SF0">
    <property type="entry name" value="RECOMBINATION PROTEIN RECR"/>
    <property type="match status" value="1"/>
</dbReference>
<dbReference type="Pfam" id="PF21175">
    <property type="entry name" value="RecR_C"/>
    <property type="match status" value="1"/>
</dbReference>
<dbReference type="Pfam" id="PF21176">
    <property type="entry name" value="RecR_HhH"/>
    <property type="match status" value="1"/>
</dbReference>
<dbReference type="Pfam" id="PF02132">
    <property type="entry name" value="RecR_ZnF"/>
    <property type="match status" value="1"/>
</dbReference>
<dbReference type="Pfam" id="PF13662">
    <property type="entry name" value="Toprim_4"/>
    <property type="match status" value="1"/>
</dbReference>
<dbReference type="SMART" id="SM00493">
    <property type="entry name" value="TOPRIM"/>
    <property type="match status" value="1"/>
</dbReference>
<dbReference type="SUPFAM" id="SSF111304">
    <property type="entry name" value="Recombination protein RecR"/>
    <property type="match status" value="1"/>
</dbReference>
<dbReference type="PROSITE" id="PS01300">
    <property type="entry name" value="RECR"/>
    <property type="match status" value="1"/>
</dbReference>
<dbReference type="PROSITE" id="PS50880">
    <property type="entry name" value="TOPRIM"/>
    <property type="match status" value="1"/>
</dbReference>
<feature type="chain" id="PRO_0000322872" description="Recombination protein RecR">
    <location>
        <begin position="1"/>
        <end position="198"/>
    </location>
</feature>
<feature type="domain" description="Toprim" evidence="1">
    <location>
        <begin position="80"/>
        <end position="175"/>
    </location>
</feature>
<feature type="zinc finger region" description="C4-type" evidence="1">
    <location>
        <begin position="57"/>
        <end position="72"/>
    </location>
</feature>
<evidence type="ECO:0000255" key="1">
    <source>
        <dbReference type="HAMAP-Rule" id="MF_00017"/>
    </source>
</evidence>
<comment type="function">
    <text evidence="1">May play a role in DNA repair. It seems to be involved in an RecBC-independent recombinational process of DNA repair. It may act with RecF and RecO.</text>
</comment>
<comment type="similarity">
    <text evidence="1">Belongs to the RecR family.</text>
</comment>
<organism>
    <name type="scientific">Burkholderia vietnamiensis (strain G4 / LMG 22486)</name>
    <name type="common">Burkholderia cepacia (strain R1808)</name>
    <dbReference type="NCBI Taxonomy" id="269482"/>
    <lineage>
        <taxon>Bacteria</taxon>
        <taxon>Pseudomonadati</taxon>
        <taxon>Pseudomonadota</taxon>
        <taxon>Betaproteobacteria</taxon>
        <taxon>Burkholderiales</taxon>
        <taxon>Burkholderiaceae</taxon>
        <taxon>Burkholderia</taxon>
        <taxon>Burkholderia cepacia complex</taxon>
    </lineage>
</organism>
<protein>
    <recommendedName>
        <fullName evidence="1">Recombination protein RecR</fullName>
    </recommendedName>
</protein>
<name>RECR_BURVG</name>
<reference key="1">
    <citation type="submission" date="2007-03" db="EMBL/GenBank/DDBJ databases">
        <title>Complete sequence of chromosome 1 of Burkholderia vietnamiensis G4.</title>
        <authorList>
            <consortium name="US DOE Joint Genome Institute"/>
            <person name="Copeland A."/>
            <person name="Lucas S."/>
            <person name="Lapidus A."/>
            <person name="Barry K."/>
            <person name="Detter J.C."/>
            <person name="Glavina del Rio T."/>
            <person name="Hammon N."/>
            <person name="Israni S."/>
            <person name="Dalin E."/>
            <person name="Tice H."/>
            <person name="Pitluck S."/>
            <person name="Chain P."/>
            <person name="Malfatti S."/>
            <person name="Shin M."/>
            <person name="Vergez L."/>
            <person name="Schmutz J."/>
            <person name="Larimer F."/>
            <person name="Land M."/>
            <person name="Hauser L."/>
            <person name="Kyrpides N."/>
            <person name="Tiedje J."/>
            <person name="Richardson P."/>
        </authorList>
    </citation>
    <scope>NUCLEOTIDE SEQUENCE [LARGE SCALE GENOMIC DNA]</scope>
    <source>
        <strain>G4 / LMG 22486</strain>
    </source>
</reference>